<comment type="induction">
    <text evidence="1">Expressed in both exponential and stationary phases.</text>
</comment>
<comment type="sequence caution" evidence="2">
    <conflict type="erroneous initiation">
        <sequence resource="EMBL-CDS" id="AAA91059"/>
    </conflict>
</comment>
<comment type="sequence caution" evidence="2">
    <conflict type="erroneous initiation">
        <sequence resource="EMBL-CDS" id="AAB18595"/>
    </conflict>
</comment>
<evidence type="ECO:0000269" key="1">
    <source>
    </source>
</evidence>
<evidence type="ECO:0000305" key="2"/>
<evidence type="ECO:0000312" key="3">
    <source>
        <dbReference type="EMBL" id="AAA91059.1"/>
    </source>
</evidence>
<organism>
    <name type="scientific">Escherichia coli (strain K12)</name>
    <dbReference type="NCBI Taxonomy" id="83333"/>
    <lineage>
        <taxon>Bacteria</taxon>
        <taxon>Pseudomonadati</taxon>
        <taxon>Pseudomonadota</taxon>
        <taxon>Gammaproteobacteria</taxon>
        <taxon>Enterobacterales</taxon>
        <taxon>Enterobacteriaceae</taxon>
        <taxon>Escherichia</taxon>
    </lineage>
</organism>
<proteinExistence type="evidence at transcript level"/>
<feature type="chain" id="PRO_0000084087" description="Protein HtrL">
    <location>
        <begin position="1"/>
        <end position="285"/>
    </location>
</feature>
<keyword id="KW-1185">Reference proteome</keyword>
<sequence>MKSSTTIITAYFDIGRGDWTANKGFREKLARSVDVYFSYFERLAALENEMIIFTSPDLKPRVEAIRNGKPTTVIVIDIKKKFRYIRSRIEKIQKDESFTNRLEPRQLKNPEYWSPEYVLVCNLKAYFVNKAINMGLVKTPLVAWIDFGYCHKPNVTRGLKIWDFPFDESKMHLFTIKKGLTVTSQQQVFDFMIGNHVYIIGGAIVGSQHKWKEFYKLVLESQKITLNNNIVDDDQGIFVMCYYKRPDLFNLNYLGRGKWFDLFRCFRSNTLGAKMQALRIFLSRK</sequence>
<accession>P25666</accession>
<accession>Q2M7T2</accession>
<reference key="1">
    <citation type="submission" date="1996-03" db="EMBL/GenBank/DDBJ databases">
        <title>The Escherichia coli htrL gene, cloning, sequencing, and transcriptional regulation: evidence for its positive regulation by the rfaH gene product.</title>
        <authorList>
            <person name="Raina S."/>
            <person name="Missiakas D."/>
            <person name="Georgopoulos C."/>
        </authorList>
    </citation>
    <scope>NUCLEOTIDE SEQUENCE [GENOMIC DNA]</scope>
    <source>
        <strain>K12</strain>
    </source>
</reference>
<reference key="2">
    <citation type="journal article" date="1994" name="Nucleic Acids Res.">
        <title>Analysis of the Escherichia coli genome. V. DNA sequence of the region from 76.0 to 81.5 minutes.</title>
        <authorList>
            <person name="Sofia H.J."/>
            <person name="Burland V."/>
            <person name="Daniels D.L."/>
            <person name="Plunkett G. III"/>
            <person name="Blattner F.R."/>
        </authorList>
    </citation>
    <scope>NUCLEOTIDE SEQUENCE [LARGE SCALE GENOMIC DNA]</scope>
    <source>
        <strain>K12 / MG1655 / ATCC 47076</strain>
    </source>
</reference>
<reference key="3">
    <citation type="journal article" date="1997" name="Science">
        <title>The complete genome sequence of Escherichia coli K-12.</title>
        <authorList>
            <person name="Blattner F.R."/>
            <person name="Plunkett G. III"/>
            <person name="Bloch C.A."/>
            <person name="Perna N.T."/>
            <person name="Burland V."/>
            <person name="Riley M."/>
            <person name="Collado-Vides J."/>
            <person name="Glasner J.D."/>
            <person name="Rode C.K."/>
            <person name="Mayhew G.F."/>
            <person name="Gregor J."/>
            <person name="Davis N.W."/>
            <person name="Kirkpatrick H.A."/>
            <person name="Goeden M.A."/>
            <person name="Rose D.J."/>
            <person name="Mau B."/>
            <person name="Shao Y."/>
        </authorList>
    </citation>
    <scope>NUCLEOTIDE SEQUENCE [LARGE SCALE GENOMIC DNA]</scope>
    <source>
        <strain>K12 / MG1655 / ATCC 47076</strain>
    </source>
</reference>
<reference key="4">
    <citation type="journal article" date="2006" name="Mol. Syst. Biol.">
        <title>Highly accurate genome sequences of Escherichia coli K-12 strains MG1655 and W3110.</title>
        <authorList>
            <person name="Hayashi K."/>
            <person name="Morooka N."/>
            <person name="Yamamoto Y."/>
            <person name="Fujita K."/>
            <person name="Isono K."/>
            <person name="Choi S."/>
            <person name="Ohtsubo E."/>
            <person name="Baba T."/>
            <person name="Wanner B.L."/>
            <person name="Mori H."/>
            <person name="Horiuchi T."/>
        </authorList>
    </citation>
    <scope>NUCLEOTIDE SEQUENCE [LARGE SCALE GENOMIC DNA]</scope>
    <source>
        <strain>K12 / W3110 / ATCC 27325 / DSM 5911</strain>
    </source>
</reference>
<reference key="5">
    <citation type="journal article" date="1990" name="J. Bacteriol.">
        <title>Cloning, expression, and characterization of the Escherichia coli K-12 rfaD gene.</title>
        <authorList>
            <person name="Pegues J.C."/>
            <person name="Chen L."/>
            <person name="Gordon A.W."/>
            <person name="Ding L."/>
            <person name="Coleman W.G. Jr."/>
        </authorList>
    </citation>
    <scope>NUCLEOTIDE SEQUENCE [GENOMIC DNA] OF 1-214</scope>
    <source>
        <strain>K12</strain>
    </source>
</reference>
<reference key="6">
    <citation type="journal article" date="1988" name="Nucleic Acids Res.">
        <title>Nucleotide sequence of the 2-amino-3-ketobutyrate coenzyme A ligase (kbl) gene of E. coli.</title>
        <authorList>
            <person name="Aronson B.D."/>
            <person name="Ravnikar P.D."/>
            <person name="Somerville R.L."/>
        </authorList>
    </citation>
    <scope>NUCLEOTIDE SEQUENCE [GENOMIC DNA] OF 213-285</scope>
    <source>
        <strain>K12</strain>
    </source>
</reference>
<reference key="7">
    <citation type="journal article" date="2000" name="Genome Res.">
        <title>Reverse transcriptase-polymerase chain reaction validation of 25 'orphan' genes from Escherichia coli K-12 MG1655.</title>
        <authorList>
            <person name="Alimi J.P."/>
            <person name="Poirot O."/>
            <person name="Lopez F."/>
            <person name="Claverie J.M."/>
        </authorList>
    </citation>
    <scope>INDUCTION</scope>
</reference>
<dbReference type="EMBL" id="M94888">
    <property type="protein sequence ID" value="AAA91059.1"/>
    <property type="status" value="ALT_INIT"/>
    <property type="molecule type" value="Genomic_DNA"/>
</dbReference>
<dbReference type="EMBL" id="U00039">
    <property type="protein sequence ID" value="AAB18595.1"/>
    <property type="status" value="ALT_INIT"/>
    <property type="molecule type" value="Genomic_DNA"/>
</dbReference>
<dbReference type="EMBL" id="U00096">
    <property type="protein sequence ID" value="AAC76642.2"/>
    <property type="molecule type" value="Genomic_DNA"/>
</dbReference>
<dbReference type="EMBL" id="AP009048">
    <property type="protein sequence ID" value="BAE77674.1"/>
    <property type="molecule type" value="Genomic_DNA"/>
</dbReference>
<dbReference type="EMBL" id="M33577">
    <property type="status" value="NOT_ANNOTATED_CDS"/>
    <property type="molecule type" value="Genomic_DNA"/>
</dbReference>
<dbReference type="EMBL" id="X06690">
    <property type="status" value="NOT_ANNOTATED_CDS"/>
    <property type="molecule type" value="Genomic_DNA"/>
</dbReference>
<dbReference type="PIR" id="S47839">
    <property type="entry name" value="S47839"/>
</dbReference>
<dbReference type="RefSeq" id="NP_418075.2">
    <property type="nucleotide sequence ID" value="NC_000913.3"/>
</dbReference>
<dbReference type="RefSeq" id="WP_000842820.1">
    <property type="nucleotide sequence ID" value="NZ_LN832404.1"/>
</dbReference>
<dbReference type="BioGRID" id="4263300">
    <property type="interactions" value="314"/>
</dbReference>
<dbReference type="STRING" id="511145.b3618"/>
<dbReference type="jPOST" id="P25666"/>
<dbReference type="PaxDb" id="511145-b3618"/>
<dbReference type="EnsemblBacteria" id="AAC76642">
    <property type="protein sequence ID" value="AAC76642"/>
    <property type="gene ID" value="b3618"/>
</dbReference>
<dbReference type="GeneID" id="948137"/>
<dbReference type="KEGG" id="ecj:JW5644"/>
<dbReference type="KEGG" id="eco:b3618"/>
<dbReference type="KEGG" id="ecoc:C3026_19615"/>
<dbReference type="PATRIC" id="fig|511145.12.peg.3738"/>
<dbReference type="EchoBASE" id="EB1174"/>
<dbReference type="eggNOG" id="ENOG502ZACE">
    <property type="taxonomic scope" value="Bacteria"/>
</dbReference>
<dbReference type="HOGENOM" id="CLU_084735_0_0_6"/>
<dbReference type="InParanoid" id="P25666"/>
<dbReference type="OMA" id="STHFFWI"/>
<dbReference type="PhylomeDB" id="P25666"/>
<dbReference type="BioCyc" id="EcoCyc:EG11188-MONOMER"/>
<dbReference type="PRO" id="PR:P25666"/>
<dbReference type="Proteomes" id="UP000000625">
    <property type="component" value="Chromosome"/>
</dbReference>
<dbReference type="InterPro" id="IPR011735">
    <property type="entry name" value="WlaTC/HtrL_glycosyltransf"/>
</dbReference>
<dbReference type="NCBIfam" id="TIGR02192">
    <property type="entry name" value="HtrL_YibB"/>
    <property type="match status" value="1"/>
</dbReference>
<dbReference type="NCBIfam" id="NF008462">
    <property type="entry name" value="PRK11346.1"/>
    <property type="match status" value="1"/>
</dbReference>
<dbReference type="Pfam" id="PF09612">
    <property type="entry name" value="HtrL_YibB"/>
    <property type="match status" value="1"/>
</dbReference>
<gene>
    <name evidence="3" type="primary">htrL</name>
    <name type="synonym">yibB</name>
    <name type="ordered locus">b3618</name>
    <name type="ordered locus">JW5644</name>
</gene>
<name>HTRL_ECOLI</name>
<protein>
    <recommendedName>
        <fullName>Protein HtrL</fullName>
    </recommendedName>
</protein>